<gene>
    <name type="primary">CMB1</name>
</gene>
<dbReference type="EMBL" id="L40404">
    <property type="protein sequence ID" value="AAA62761.1"/>
    <property type="molecule type" value="mRNA"/>
</dbReference>
<dbReference type="PIR" id="T10714">
    <property type="entry name" value="T10714"/>
</dbReference>
<dbReference type="SMR" id="Q39685"/>
<dbReference type="GO" id="GO:0005634">
    <property type="term" value="C:nucleus"/>
    <property type="evidence" value="ECO:0007669"/>
    <property type="project" value="UniProtKB-SubCell"/>
</dbReference>
<dbReference type="GO" id="GO:0003700">
    <property type="term" value="F:DNA-binding transcription factor activity"/>
    <property type="evidence" value="ECO:0007669"/>
    <property type="project" value="InterPro"/>
</dbReference>
<dbReference type="GO" id="GO:0046983">
    <property type="term" value="F:protein dimerization activity"/>
    <property type="evidence" value="ECO:0007669"/>
    <property type="project" value="InterPro"/>
</dbReference>
<dbReference type="GO" id="GO:0000977">
    <property type="term" value="F:RNA polymerase II transcription regulatory region sequence-specific DNA binding"/>
    <property type="evidence" value="ECO:0007669"/>
    <property type="project" value="InterPro"/>
</dbReference>
<dbReference type="GO" id="GO:0045944">
    <property type="term" value="P:positive regulation of transcription by RNA polymerase II"/>
    <property type="evidence" value="ECO:0007669"/>
    <property type="project" value="InterPro"/>
</dbReference>
<dbReference type="CDD" id="cd00265">
    <property type="entry name" value="MADS_MEF2_like"/>
    <property type="match status" value="1"/>
</dbReference>
<dbReference type="FunFam" id="3.40.1810.10:FF:000004">
    <property type="entry name" value="MADS-box transcription factor 1"/>
    <property type="match status" value="1"/>
</dbReference>
<dbReference type="Gene3D" id="3.40.1810.10">
    <property type="entry name" value="Transcription factor, MADS-box"/>
    <property type="match status" value="1"/>
</dbReference>
<dbReference type="InterPro" id="IPR050142">
    <property type="entry name" value="MADS-box/MEF2_TF"/>
</dbReference>
<dbReference type="InterPro" id="IPR033896">
    <property type="entry name" value="MEF2-like_N"/>
</dbReference>
<dbReference type="InterPro" id="IPR002487">
    <property type="entry name" value="TF_Kbox"/>
</dbReference>
<dbReference type="InterPro" id="IPR002100">
    <property type="entry name" value="TF_MADSbox"/>
</dbReference>
<dbReference type="InterPro" id="IPR036879">
    <property type="entry name" value="TF_MADSbox_sf"/>
</dbReference>
<dbReference type="PANTHER" id="PTHR48019">
    <property type="entry name" value="SERUM RESPONSE FACTOR HOMOLOG"/>
    <property type="match status" value="1"/>
</dbReference>
<dbReference type="Pfam" id="PF01486">
    <property type="entry name" value="K-box"/>
    <property type="match status" value="1"/>
</dbReference>
<dbReference type="Pfam" id="PF00319">
    <property type="entry name" value="SRF-TF"/>
    <property type="match status" value="1"/>
</dbReference>
<dbReference type="PRINTS" id="PR00404">
    <property type="entry name" value="MADSDOMAIN"/>
</dbReference>
<dbReference type="SMART" id="SM00432">
    <property type="entry name" value="MADS"/>
    <property type="match status" value="1"/>
</dbReference>
<dbReference type="SUPFAM" id="SSF55455">
    <property type="entry name" value="SRF-like"/>
    <property type="match status" value="1"/>
</dbReference>
<dbReference type="PROSITE" id="PS51297">
    <property type="entry name" value="K_BOX"/>
    <property type="match status" value="1"/>
</dbReference>
<dbReference type="PROSITE" id="PS00350">
    <property type="entry name" value="MADS_BOX_1"/>
    <property type="match status" value="1"/>
</dbReference>
<dbReference type="PROSITE" id="PS50066">
    <property type="entry name" value="MADS_BOX_2"/>
    <property type="match status" value="1"/>
</dbReference>
<feature type="chain" id="PRO_0000199492" description="MADS-box protein CMB1">
    <location>
        <begin position="1"/>
        <end position="233"/>
    </location>
</feature>
<feature type="domain" description="MADS-box" evidence="1">
    <location>
        <begin position="3"/>
        <end position="58"/>
    </location>
</feature>
<feature type="domain" description="K-box" evidence="2">
    <location>
        <begin position="87"/>
        <end position="177"/>
    </location>
</feature>
<name>CMB1_DIACA</name>
<organism>
    <name type="scientific">Dianthus caryophyllus</name>
    <name type="common">Carnation</name>
    <name type="synonym">Clove pink</name>
    <dbReference type="NCBI Taxonomy" id="3570"/>
    <lineage>
        <taxon>Eukaryota</taxon>
        <taxon>Viridiplantae</taxon>
        <taxon>Streptophyta</taxon>
        <taxon>Embryophyta</taxon>
        <taxon>Tracheophyta</taxon>
        <taxon>Spermatophyta</taxon>
        <taxon>Magnoliopsida</taxon>
        <taxon>eudicotyledons</taxon>
        <taxon>Gunneridae</taxon>
        <taxon>Pentapetalae</taxon>
        <taxon>Caryophyllales</taxon>
        <taxon>Caryophyllaceae</taxon>
        <taxon>Caryophylleae</taxon>
        <taxon>Dianthus</taxon>
    </lineage>
</organism>
<proteinExistence type="evidence at transcript level"/>
<reference key="1">
    <citation type="submission" date="1995-03" db="EMBL/GenBank/DDBJ databases">
        <authorList>
            <person name="Baudinette S.C."/>
            <person name="Savin K.W."/>
        </authorList>
    </citation>
    <scope>NUCLEOTIDE SEQUENCE [MRNA]</scope>
    <source>
        <strain>cv. Scania</strain>
        <tissue>Petal</tissue>
    </source>
</reference>
<sequence>MGRGRVELKRIENKINRQVTFAKRRNGLLKKAYELSVLCDAEVALIVFSNRGKLYEFCSTSCMNKTLERYQRCSYGSLETSQPSKETESSYQEYLKLKAKVDVLQRSHRNLLGEDLGELSTKELEQLEHQLDKSLRQIRSIKTQHMLDQLADLQKKEEMLFESNRALKTKLEESCASFRPNWDVRQPGDGFFEPLPLPCNNNLQIGYNEATQDQMNATTSAQNVHGFAQGWML</sequence>
<evidence type="ECO:0000255" key="1">
    <source>
        <dbReference type="PROSITE-ProRule" id="PRU00251"/>
    </source>
</evidence>
<evidence type="ECO:0000255" key="2">
    <source>
        <dbReference type="PROSITE-ProRule" id="PRU00629"/>
    </source>
</evidence>
<comment type="subcellular location">
    <subcellularLocation>
        <location evidence="1">Nucleus</location>
    </subcellularLocation>
</comment>
<accession>Q39685</accession>
<keyword id="KW-0238">DNA-binding</keyword>
<keyword id="KW-0539">Nucleus</keyword>
<keyword id="KW-0804">Transcription</keyword>
<keyword id="KW-0805">Transcription regulation</keyword>
<protein>
    <recommendedName>
        <fullName>MADS-box protein CMB1</fullName>
    </recommendedName>
</protein>